<dbReference type="EMBL" id="DQ138347">
    <property type="protein sequence ID" value="AAZ30425.1"/>
    <property type="molecule type" value="mRNA"/>
</dbReference>
<dbReference type="SMR" id="A4GDS9"/>
<dbReference type="Allergome" id="490">
    <property type="allergen name" value="Ole e 2"/>
</dbReference>
<dbReference type="GO" id="GO:0005938">
    <property type="term" value="C:cell cortex"/>
    <property type="evidence" value="ECO:0007669"/>
    <property type="project" value="TreeGrafter"/>
</dbReference>
<dbReference type="GO" id="GO:0005856">
    <property type="term" value="C:cytoskeleton"/>
    <property type="evidence" value="ECO:0007669"/>
    <property type="project" value="UniProtKB-SubCell"/>
</dbReference>
<dbReference type="GO" id="GO:0003785">
    <property type="term" value="F:actin monomer binding"/>
    <property type="evidence" value="ECO:0007669"/>
    <property type="project" value="TreeGrafter"/>
</dbReference>
<dbReference type="CDD" id="cd00148">
    <property type="entry name" value="PROF"/>
    <property type="match status" value="1"/>
</dbReference>
<dbReference type="FunFam" id="3.30.450.30:FF:000001">
    <property type="entry name" value="Profilin"/>
    <property type="match status" value="1"/>
</dbReference>
<dbReference type="Gene3D" id="3.30.450.30">
    <property type="entry name" value="Dynein light chain 2a, cytoplasmic"/>
    <property type="match status" value="1"/>
</dbReference>
<dbReference type="InterPro" id="IPR048278">
    <property type="entry name" value="PFN"/>
</dbReference>
<dbReference type="InterPro" id="IPR005455">
    <property type="entry name" value="PFN_euk"/>
</dbReference>
<dbReference type="InterPro" id="IPR036140">
    <property type="entry name" value="PFN_sf"/>
</dbReference>
<dbReference type="InterPro" id="IPR027310">
    <property type="entry name" value="Profilin_CS"/>
</dbReference>
<dbReference type="PANTHER" id="PTHR11604">
    <property type="entry name" value="PROFILIN"/>
    <property type="match status" value="1"/>
</dbReference>
<dbReference type="PANTHER" id="PTHR11604:SF25">
    <property type="entry name" value="PROFILIN-5"/>
    <property type="match status" value="1"/>
</dbReference>
<dbReference type="Pfam" id="PF00235">
    <property type="entry name" value="Profilin"/>
    <property type="match status" value="1"/>
</dbReference>
<dbReference type="PRINTS" id="PR00392">
    <property type="entry name" value="PROFILIN"/>
</dbReference>
<dbReference type="PRINTS" id="PR01640">
    <property type="entry name" value="PROFILINPLNT"/>
</dbReference>
<dbReference type="SMART" id="SM00392">
    <property type="entry name" value="PROF"/>
    <property type="match status" value="1"/>
</dbReference>
<dbReference type="SUPFAM" id="SSF55770">
    <property type="entry name" value="Profilin (actin-binding protein)"/>
    <property type="match status" value="1"/>
</dbReference>
<dbReference type="PROSITE" id="PS00414">
    <property type="entry name" value="PROFILIN"/>
    <property type="match status" value="1"/>
</dbReference>
<reference key="1">
    <citation type="journal article" date="2012" name="PLoS ONE">
        <title>Characterization of profilin polymorphism in pollen with a focus on multifunctionality.</title>
        <authorList>
            <person name="Jimenez-Lopez J.C."/>
            <person name="Morales S."/>
            <person name="Castro A.J."/>
            <person name="Volkmann D."/>
            <person name="Rodriguez-Garcia M.I."/>
            <person name="Alche Jde D."/>
        </authorList>
    </citation>
    <scope>NUCLEOTIDE SEQUENCE [MRNA]</scope>
    <scope>POLYMORPHISM</scope>
    <source>
        <strain>cv. Leccino</strain>
    </source>
</reference>
<reference key="2">
    <citation type="journal article" date="2013" name="PLoS ONE">
        <title>Analysis of the effects of polymorphism on pollen profilin structural functionality and the generation of conformational, T- and B-cell epitopes.</title>
        <authorList>
            <person name="Jimenez-Lopez J.C."/>
            <person name="Rodriguez-Garcia M.I."/>
            <person name="Alche J.D."/>
        </authorList>
    </citation>
    <scope>3D-STRUCTURE MODELING</scope>
    <scope>DISULFIDE BOND</scope>
</reference>
<evidence type="ECO:0000250" key="1"/>
<evidence type="ECO:0000305" key="2"/>
<evidence type="ECO:0000305" key="3">
    <source>
    </source>
</evidence>
<sequence length="134" mass="14395">MSWQTYVDDHLMCDIEGHEGHRLTLAAIVGHDGSVWAQSATSPQFKPEEMNGIMTDFNEPGHLAPTGLHLGGTKYMVIQGEAGAVIRGKKGSGGITIKKTGQALVCGIYEEPVTPGQCNMVVERLGDYLLEQGL</sequence>
<feature type="initiator methionine" description="Removed" evidence="1">
    <location>
        <position position="1"/>
    </location>
</feature>
<feature type="chain" id="PRO_0000425020" description="Profilin-3">
    <location>
        <begin position="2"/>
        <end position="134"/>
    </location>
</feature>
<feature type="short sequence motif" description="Involved in PIP2 interaction">
    <location>
        <begin position="84"/>
        <end position="100"/>
    </location>
</feature>
<feature type="modified residue" description="Phosphothreonine" evidence="1">
    <location>
        <position position="114"/>
    </location>
</feature>
<feature type="disulfide bond" evidence="3">
    <location>
        <begin position="13"/>
        <end position="118"/>
    </location>
</feature>
<proteinExistence type="evidence at protein level"/>
<protein>
    <recommendedName>
        <fullName>Profilin-3</fullName>
    </recommendedName>
    <alternativeName>
        <fullName>Pollen allergen Ole e 2</fullName>
    </alternativeName>
    <allergenName>Ole e 2</allergenName>
</protein>
<comment type="function">
    <text evidence="1">Binds to actin and affects the structure of the cytoskeleton. At high concentrations, profilin prevents the polymerization of actin, whereas it enhances it at low concentrations (By similarity).</text>
</comment>
<comment type="subunit">
    <text evidence="1">Occurs in many kinds of cells as a complex with monomeric actin in a 1:1 ratio.</text>
</comment>
<comment type="subcellular location">
    <subcellularLocation>
        <location evidence="1">Cytoplasm</location>
        <location evidence="1">Cytoskeleton</location>
    </subcellularLocation>
</comment>
<comment type="PTM">
    <text evidence="1">Phosphorylated by MAP kinases.</text>
</comment>
<comment type="polymorphism">
    <text>Several isoforms of the allergen exist due to polymorphism.</text>
</comment>
<comment type="allergen">
    <text>Causes an allergic reaction in human.</text>
</comment>
<comment type="miscellaneous">
    <text evidence="3">The variability of the residues taking part of IgE-binding epitopes might be responsible of the difference in cross-reactivity among olive pollen cultivars, and between distantly related pollen species, leading to a variable range of allergy reactions among atopic patients.</text>
</comment>
<comment type="similarity">
    <text evidence="2">Belongs to the profilin family.</text>
</comment>
<keyword id="KW-0009">Actin-binding</keyword>
<keyword id="KW-0020">Allergen</keyword>
<keyword id="KW-0963">Cytoplasm</keyword>
<keyword id="KW-0206">Cytoskeleton</keyword>
<keyword id="KW-1015">Disulfide bond</keyword>
<keyword id="KW-0597">Phosphoprotein</keyword>
<accession>A4GDS9</accession>
<organism>
    <name type="scientific">Olea europaea</name>
    <name type="common">Common olive</name>
    <dbReference type="NCBI Taxonomy" id="4146"/>
    <lineage>
        <taxon>Eukaryota</taxon>
        <taxon>Viridiplantae</taxon>
        <taxon>Streptophyta</taxon>
        <taxon>Embryophyta</taxon>
        <taxon>Tracheophyta</taxon>
        <taxon>Spermatophyta</taxon>
        <taxon>Magnoliopsida</taxon>
        <taxon>eudicotyledons</taxon>
        <taxon>Gunneridae</taxon>
        <taxon>Pentapetalae</taxon>
        <taxon>asterids</taxon>
        <taxon>lamiids</taxon>
        <taxon>Lamiales</taxon>
        <taxon>Oleaceae</taxon>
        <taxon>Oleeae</taxon>
        <taxon>Olea</taxon>
    </lineage>
</organism>
<name>PROBC_OLEEU</name>